<proteinExistence type="inferred from homology"/>
<evidence type="ECO:0000250" key="1">
    <source>
        <dbReference type="UniProtKB" id="P04798"/>
    </source>
</evidence>
<evidence type="ECO:0000250" key="2">
    <source>
        <dbReference type="UniProtKB" id="Q5AR27"/>
    </source>
</evidence>
<evidence type="ECO:0000255" key="3"/>
<evidence type="ECO:0000269" key="4">
    <source>
    </source>
</evidence>
<evidence type="ECO:0000269" key="5">
    <source>
    </source>
</evidence>
<evidence type="ECO:0000303" key="6">
    <source>
    </source>
</evidence>
<evidence type="ECO:0000303" key="7">
    <source>
    </source>
</evidence>
<evidence type="ECO:0000305" key="8"/>
<evidence type="ECO:0000305" key="9">
    <source>
    </source>
</evidence>
<evidence type="ECO:0000305" key="10">
    <source>
    </source>
</evidence>
<dbReference type="EC" id="1.-.-.-" evidence="9"/>
<dbReference type="EMBL" id="CDMC01000024">
    <property type="protein sequence ID" value="CEL11260.1"/>
    <property type="molecule type" value="Genomic_DNA"/>
</dbReference>
<dbReference type="SMR" id="A0A0U5CJM3"/>
<dbReference type="STRING" id="454130.A0A0U5CJM3"/>
<dbReference type="OMA" id="AINANMA"/>
<dbReference type="OrthoDB" id="1844152at2759"/>
<dbReference type="UniPathway" id="UPA00213"/>
<dbReference type="Proteomes" id="UP000054771">
    <property type="component" value="Unassembled WGS sequence"/>
</dbReference>
<dbReference type="GO" id="GO:0016020">
    <property type="term" value="C:membrane"/>
    <property type="evidence" value="ECO:0007669"/>
    <property type="project" value="UniProtKB-SubCell"/>
</dbReference>
<dbReference type="GO" id="GO:0020037">
    <property type="term" value="F:heme binding"/>
    <property type="evidence" value="ECO:0007669"/>
    <property type="project" value="InterPro"/>
</dbReference>
<dbReference type="GO" id="GO:0005506">
    <property type="term" value="F:iron ion binding"/>
    <property type="evidence" value="ECO:0007669"/>
    <property type="project" value="InterPro"/>
</dbReference>
<dbReference type="GO" id="GO:0004497">
    <property type="term" value="F:monooxygenase activity"/>
    <property type="evidence" value="ECO:0007669"/>
    <property type="project" value="UniProtKB-KW"/>
</dbReference>
<dbReference type="GO" id="GO:0016705">
    <property type="term" value="F:oxidoreductase activity, acting on paired donors, with incorporation or reduction of molecular oxygen"/>
    <property type="evidence" value="ECO:0007669"/>
    <property type="project" value="InterPro"/>
</dbReference>
<dbReference type="GO" id="GO:0019748">
    <property type="term" value="P:secondary metabolic process"/>
    <property type="evidence" value="ECO:0007669"/>
    <property type="project" value="UniProtKB-ARBA"/>
</dbReference>
<dbReference type="GO" id="GO:0016114">
    <property type="term" value="P:terpenoid biosynthetic process"/>
    <property type="evidence" value="ECO:0007669"/>
    <property type="project" value="UniProtKB-UniPathway"/>
</dbReference>
<dbReference type="CDD" id="cd11041">
    <property type="entry name" value="CYP503A1-like"/>
    <property type="match status" value="1"/>
</dbReference>
<dbReference type="FunFam" id="1.10.630.10:FF:000059">
    <property type="entry name" value="Cytochrome P450 monooxygenase"/>
    <property type="match status" value="1"/>
</dbReference>
<dbReference type="Gene3D" id="1.10.630.10">
    <property type="entry name" value="Cytochrome P450"/>
    <property type="match status" value="1"/>
</dbReference>
<dbReference type="InterPro" id="IPR001128">
    <property type="entry name" value="Cyt_P450"/>
</dbReference>
<dbReference type="InterPro" id="IPR017972">
    <property type="entry name" value="Cyt_P450_CS"/>
</dbReference>
<dbReference type="InterPro" id="IPR002403">
    <property type="entry name" value="Cyt_P450_E_grp-IV"/>
</dbReference>
<dbReference type="InterPro" id="IPR036396">
    <property type="entry name" value="Cyt_P450_sf"/>
</dbReference>
<dbReference type="PANTHER" id="PTHR46206">
    <property type="entry name" value="CYTOCHROME P450"/>
    <property type="match status" value="1"/>
</dbReference>
<dbReference type="PANTHER" id="PTHR46206:SF10">
    <property type="entry name" value="CYTOCHROME P450 MONOOXYGENASE AUSI"/>
    <property type="match status" value="1"/>
</dbReference>
<dbReference type="Pfam" id="PF00067">
    <property type="entry name" value="p450"/>
    <property type="match status" value="1"/>
</dbReference>
<dbReference type="PRINTS" id="PR00465">
    <property type="entry name" value="EP450IV"/>
</dbReference>
<dbReference type="SUPFAM" id="SSF48264">
    <property type="entry name" value="Cytochrome P450"/>
    <property type="match status" value="1"/>
</dbReference>
<dbReference type="PROSITE" id="PS00086">
    <property type="entry name" value="CYTOCHROME_P450"/>
    <property type="match status" value="1"/>
</dbReference>
<comment type="function">
    <text evidence="2 4 5">Cytochrome P450 monooxygenase; part of the gene cluster that mediates the biosynthesis of calidodehydroaustin, a fungal meroterpenoid (PubMed:28233494, PubMed:29076725). The first step of the pathway is the synthesis of 3,5-dimethylorsellinic acid by the polyketide synthase ausA (PubMed:28233494). 3,5-dimethylorsellinic acid is then prenylated by the polyprenyl transferase ausN (PubMed:28233494). Further epoxidation by the FAD-dependent monooxygenase ausM and cyclization by the probable terpene cyclase ausL lead to the formation of protoaustinoid A (By similarity). Protoaustinoid A is then oxidized to spiro-lactone preaustinoid A3 by the combined action of the FAD-binding monooxygenases ausB and ausC, and the dioxygenase ausE (By similarity). Acid-catalyzed keto-rearrangement and ring contraction of the tetraketide portion of preaustinoid A3 by ausJ lead to the formation of preaustinoid A4 (By similarity). The aldo-keto reductase ausK, with the help of ausH, is involved in the next step by transforming preaustinoid A4 into isoaustinone which is in turn hydroxylated by the P450 monooxygenase ausI to form austinolide (By similarity). The cytochrome P450 monooxygenase ausG modifies austinolide to austinol (By similarity). Austinol is further acetylated to austin by the O-acetyltransferase ausP, which spontaneously changes to dehydroaustin (PubMed:28233494). The cytochrome P450 monooxygenase ausR then converts dehydroaustin is into 7-dehydrodehydroaustin (PubMed:28233494). The hydroxylation catalyzed by ausR permits the O-acetyltransferase ausQ to add an additional acetyl group to the molecule, leading to the formation of acetoxydehydroaustin (PubMed:28233494). The short chain dehydrogenase ausT catalyzes the reduction of the double bond present between carbon atoms 1 and 2 to convert 7-dehydrodehydroaustin into 1,2-dihydro-7-hydroxydehydroaustin (PubMed:28233494). AusQ catalyzes not only an acetylation reaction but also the addition of the PKS ausV diketide product to 1,2-dihydro-7-hydroxydehydroaustin, forming precalidodehydroaustin (PubMed:28233494). Finally, the iron/alpha-ketoglutarate-dependent dioxygenase converts precalidodehydroaustin into calidodehydroaustin (PubMed:28233494).</text>
</comment>
<comment type="cofactor">
    <cofactor evidence="1">
        <name>heme</name>
        <dbReference type="ChEBI" id="CHEBI:30413"/>
    </cofactor>
</comment>
<comment type="pathway">
    <text evidence="9">Secondary metabolite biosynthesis; terpenoid biosynthesis.</text>
</comment>
<comment type="subcellular location">
    <subcellularLocation>
        <location evidence="3">Membrane</location>
        <topology evidence="3">Single-pass membrane protein</topology>
    </subcellularLocation>
</comment>
<comment type="miscellaneous">
    <text evidence="10">In A.calidoustus, the austinoid gene cluster lies on a contiguous DNA region, while clusters from E.nidulans and P.brasilianum are split in their respective genomes. Genetic rearrangements provoked variability among the clusters and E.nidulans produces the least number of austionoid derivatives with the end products austinol and dehydroaustinol, while P.brasilianum can produce until acetoxydehydroaustin, and A.calidoustus produces the highest number of identified derivatives.</text>
</comment>
<comment type="similarity">
    <text evidence="8">Belongs to the cytochrome P450 family.</text>
</comment>
<reference key="1">
    <citation type="journal article" date="2016" name="Genome Announc.">
        <title>Draft genome sequences of fungus Aspergillus calidoustus.</title>
        <authorList>
            <person name="Horn F."/>
            <person name="Linde J."/>
            <person name="Mattern D.J."/>
            <person name="Walther G."/>
            <person name="Guthke R."/>
            <person name="Scherlach K."/>
            <person name="Martin K."/>
            <person name="Brakhage A.A."/>
            <person name="Petzke L."/>
            <person name="Valiante V."/>
        </authorList>
    </citation>
    <scope>NUCLEOTIDE SEQUENCE [LARGE SCALE GENOMIC DNA]</scope>
    <source>
        <strain>SF006504</strain>
    </source>
</reference>
<reference key="2">
    <citation type="journal article" date="2017" name="ACS Chem. Biol.">
        <title>Discovery of an Extended Austinoid Biosynthetic Pathway in Aspergillus calidoustus.</title>
        <authorList>
            <person name="Valiante V."/>
            <person name="Mattern D.J."/>
            <person name="Schueffler A."/>
            <person name="Horn F."/>
            <person name="Walther G."/>
            <person name="Scherlach K."/>
            <person name="Petzke L."/>
            <person name="Dickhaut J."/>
            <person name="Guthke R."/>
            <person name="Hertweck C."/>
            <person name="Nett M."/>
            <person name="Thines E."/>
            <person name="Brakhage A.A."/>
        </authorList>
    </citation>
    <scope>FUNCTION</scope>
    <scope>PATHWAY</scope>
</reference>
<reference key="3">
    <citation type="journal article" date="2017" name="ACS Chem. Biol.">
        <title>Rewiring of the austinoid biosynthetic pathway in filamentous fungi.</title>
        <authorList>
            <person name="Mattern D.J."/>
            <person name="Valiante V."/>
            <person name="Horn F."/>
            <person name="Petzke L."/>
            <person name="Brakhage A.A."/>
        </authorList>
    </citation>
    <scope>FUNCTION</scope>
</reference>
<organism>
    <name type="scientific">Aspergillus calidoustus</name>
    <dbReference type="NCBI Taxonomy" id="454130"/>
    <lineage>
        <taxon>Eukaryota</taxon>
        <taxon>Fungi</taxon>
        <taxon>Dikarya</taxon>
        <taxon>Ascomycota</taxon>
        <taxon>Pezizomycotina</taxon>
        <taxon>Eurotiomycetes</taxon>
        <taxon>Eurotiomycetidae</taxon>
        <taxon>Eurotiales</taxon>
        <taxon>Aspergillaceae</taxon>
        <taxon>Aspergillus</taxon>
        <taxon>Aspergillus subgen. Nidulantes</taxon>
    </lineage>
</organism>
<gene>
    <name evidence="7" type="primary">ausI</name>
    <name type="ORF">ASPCAL14363</name>
</gene>
<feature type="chain" id="PRO_0000453839" description="Cytochrome P450 monooxygenase ausI">
    <location>
        <begin position="1"/>
        <end position="517"/>
    </location>
</feature>
<feature type="transmembrane region" description="Helical" evidence="3">
    <location>
        <begin position="8"/>
        <end position="28"/>
    </location>
</feature>
<feature type="binding site" description="axial binding residue" evidence="1">
    <location>
        <position position="457"/>
    </location>
    <ligand>
        <name>heme</name>
        <dbReference type="ChEBI" id="CHEBI:30413"/>
    </ligand>
    <ligandPart>
        <name>Fe</name>
        <dbReference type="ChEBI" id="CHEBI:18248"/>
    </ligandPart>
</feature>
<accession>A0A0U5CJM3</accession>
<name>AUSI_ASPCI</name>
<keyword id="KW-0349">Heme</keyword>
<keyword id="KW-0408">Iron</keyword>
<keyword id="KW-0472">Membrane</keyword>
<keyword id="KW-0479">Metal-binding</keyword>
<keyword id="KW-0503">Monooxygenase</keyword>
<keyword id="KW-0560">Oxidoreductase</keyword>
<keyword id="KW-1185">Reference proteome</keyword>
<keyword id="KW-0812">Transmembrane</keyword>
<keyword id="KW-1133">Transmembrane helix</keyword>
<protein>
    <recommendedName>
        <fullName evidence="6">Cytochrome P450 monooxygenase ausI</fullName>
        <ecNumber evidence="9">1.-.-.-</ecNumber>
    </recommendedName>
    <alternativeName>
        <fullName evidence="6">Austinoid biosynthesis cluster protein I</fullName>
    </alternativeName>
</protein>
<sequence>MLHETTNLAPLGQPWIAGLVVVSAVLYLLYSTQRWRANNIPLLNDAGPFDFLQATAVNRFRRDARQLIKSGFDSHRDVFAMRTDVGVELFASPEYADQFRNHPSLKVFPFTAKMHHGHLPGFELCRSQPVEDRIFIESVRVQLAQSLGKLIQPLASDIGQAISDRWPSESGWEEIALGSVVERTISQGTSSVYCLDKAWPEFVVKMEMALGMASAALSAWPVMLRRIVAKFLPECLELYRTMDAGRELMSRDMRRRTALQASTGEAPLNFFEWFKEASHGEEHDELILNLRIAFASMHGLCDHLVKILLRLSEDPQLVDDLRKEVIQVYKTHGWSKTALYHLKLMDSAFKEVQRVDPILFGMPTPISLVQTHSNYETAVGRVAVDDVTLKDGLVIRKGQSIRISGHTMWDEDKYPDAAHFDAYRFYKLRQAPGQENTAQFTSPTSDHLGFGYGGRACPGRFFAAAVLKISLCHLLMKYDIKPADGETGPHVWEFAAAINANMAAKVLVRRRQPEIQL</sequence>